<sequence length="667" mass="76661">MRLTSLQRVGHTAVENNLSNASQRTILLKDENRLEQRLKEIPAEPGCYLMRDVEDRLLYVGKSKCLRNRVRSYFRSSSDHGPRIRLMVRQIAEIEFIVTDSEAESLVLESNLIKNQQPHFNVLLKDDKKYPYLCITWSEEYPRIFITRRRRFRNKNDRFYGPYVDVGLLRRTLLLVKRSFPLRQRPRPLHQDRTCLNYSIGRCPGVCQQKITPQDYHQVLRKVAMVFQGRNQELKVLLEKQMERYSDRMDYESAANIRDQIKGLEQLTEGQKMSLPDSSVSRDVLAIASDHRVAAVQLFQMRAGKLVNRLGFTADAVDQTLGSVLQRVIEEHYSQVDAVEVPPEVLVQYSLPQQELLVDWLSEHRGRRVQISCPQRQAKAELIELVERNAVFELSRAKSGQQQQELATEDLAQLLELTTQPRRIEGYDISHIQGSDAVASQVVFIDGLPAKQHYRKYKIKSSSIKSGHSDDFMAMAEIMRRRFRRWARVKQEGSNFENLQRCSGSALQTDGLNDWPDVVMIDGGKGQLSSAMEALRELDLHEDLVVCSLAKKHEQIFVPGQSKPLDSDPDQLGVVLLRRLRDEAHRFAVSYHRQQRGVRMNRSRLTDIPGLGPRRVRDLLAHFQSIDAIQLASVQQISQAPGLGPALALQVWTYFHPEADIALEEVA</sequence>
<protein>
    <recommendedName>
        <fullName evidence="1">UvrABC system protein C</fullName>
        <shortName evidence="1">Protein UvrC</shortName>
    </recommendedName>
    <alternativeName>
        <fullName evidence="1">Excinuclease ABC subunit C</fullName>
    </alternativeName>
</protein>
<gene>
    <name evidence="1" type="primary">uvrC</name>
    <name type="ordered locus">PMT_0724</name>
</gene>
<comment type="function">
    <text evidence="1">The UvrABC repair system catalyzes the recognition and processing of DNA lesions. UvrC both incises the 5' and 3' sides of the lesion. The N-terminal half is responsible for the 3' incision and the C-terminal half is responsible for the 5' incision.</text>
</comment>
<comment type="subunit">
    <text evidence="1">Interacts with UvrB in an incision complex.</text>
</comment>
<comment type="subcellular location">
    <subcellularLocation>
        <location evidence="1">Cytoplasm</location>
    </subcellularLocation>
</comment>
<comment type="similarity">
    <text evidence="1">Belongs to the UvrC family.</text>
</comment>
<keyword id="KW-0963">Cytoplasm</keyword>
<keyword id="KW-0227">DNA damage</keyword>
<keyword id="KW-0228">DNA excision</keyword>
<keyword id="KW-0234">DNA repair</keyword>
<keyword id="KW-0267">Excision nuclease</keyword>
<keyword id="KW-1185">Reference proteome</keyword>
<keyword id="KW-0742">SOS response</keyword>
<feature type="chain" id="PRO_0000264924" description="UvrABC system protein C">
    <location>
        <begin position="1"/>
        <end position="667"/>
    </location>
</feature>
<feature type="domain" description="GIY-YIG" evidence="1">
    <location>
        <begin position="43"/>
        <end position="122"/>
    </location>
</feature>
<feature type="domain" description="UVR" evidence="1">
    <location>
        <begin position="232"/>
        <end position="267"/>
    </location>
</feature>
<name>UVRC_PROMM</name>
<reference key="1">
    <citation type="journal article" date="2003" name="Nature">
        <title>Genome divergence in two Prochlorococcus ecotypes reflects oceanic niche differentiation.</title>
        <authorList>
            <person name="Rocap G."/>
            <person name="Larimer F.W."/>
            <person name="Lamerdin J.E."/>
            <person name="Malfatti S."/>
            <person name="Chain P."/>
            <person name="Ahlgren N.A."/>
            <person name="Arellano A."/>
            <person name="Coleman M."/>
            <person name="Hauser L."/>
            <person name="Hess W.R."/>
            <person name="Johnson Z.I."/>
            <person name="Land M.L."/>
            <person name="Lindell D."/>
            <person name="Post A.F."/>
            <person name="Regala W."/>
            <person name="Shah M."/>
            <person name="Shaw S.L."/>
            <person name="Steglich C."/>
            <person name="Sullivan M.B."/>
            <person name="Ting C.S."/>
            <person name="Tolonen A."/>
            <person name="Webb E.A."/>
            <person name="Zinser E.R."/>
            <person name="Chisholm S.W."/>
        </authorList>
    </citation>
    <scope>NUCLEOTIDE SEQUENCE [LARGE SCALE GENOMIC DNA]</scope>
    <source>
        <strain>MIT 9313</strain>
    </source>
</reference>
<dbReference type="EMBL" id="BX548175">
    <property type="protein sequence ID" value="CAE20899.1"/>
    <property type="molecule type" value="Genomic_DNA"/>
</dbReference>
<dbReference type="RefSeq" id="WP_011130102.1">
    <property type="nucleotide sequence ID" value="NC_005071.1"/>
</dbReference>
<dbReference type="SMR" id="Q7V7L7"/>
<dbReference type="KEGG" id="pmt:PMT_0724"/>
<dbReference type="eggNOG" id="COG0322">
    <property type="taxonomic scope" value="Bacteria"/>
</dbReference>
<dbReference type="HOGENOM" id="CLU_014841_3_2_3"/>
<dbReference type="OrthoDB" id="9804933at2"/>
<dbReference type="Proteomes" id="UP000001423">
    <property type="component" value="Chromosome"/>
</dbReference>
<dbReference type="GO" id="GO:0005737">
    <property type="term" value="C:cytoplasm"/>
    <property type="evidence" value="ECO:0007669"/>
    <property type="project" value="UniProtKB-SubCell"/>
</dbReference>
<dbReference type="GO" id="GO:0009380">
    <property type="term" value="C:excinuclease repair complex"/>
    <property type="evidence" value="ECO:0007669"/>
    <property type="project" value="InterPro"/>
</dbReference>
<dbReference type="GO" id="GO:0003677">
    <property type="term" value="F:DNA binding"/>
    <property type="evidence" value="ECO:0007669"/>
    <property type="project" value="UniProtKB-UniRule"/>
</dbReference>
<dbReference type="GO" id="GO:0009381">
    <property type="term" value="F:excinuclease ABC activity"/>
    <property type="evidence" value="ECO:0007669"/>
    <property type="project" value="UniProtKB-UniRule"/>
</dbReference>
<dbReference type="GO" id="GO:0006289">
    <property type="term" value="P:nucleotide-excision repair"/>
    <property type="evidence" value="ECO:0007669"/>
    <property type="project" value="UniProtKB-UniRule"/>
</dbReference>
<dbReference type="GO" id="GO:0009432">
    <property type="term" value="P:SOS response"/>
    <property type="evidence" value="ECO:0007669"/>
    <property type="project" value="UniProtKB-UniRule"/>
</dbReference>
<dbReference type="CDD" id="cd10434">
    <property type="entry name" value="GIY-YIG_UvrC_Cho"/>
    <property type="match status" value="1"/>
</dbReference>
<dbReference type="FunFam" id="3.40.1440.10:FF:000001">
    <property type="entry name" value="UvrABC system protein C"/>
    <property type="match status" value="1"/>
</dbReference>
<dbReference type="Gene3D" id="1.10.150.20">
    <property type="entry name" value="5' to 3' exonuclease, C-terminal subdomain"/>
    <property type="match status" value="1"/>
</dbReference>
<dbReference type="Gene3D" id="3.40.1440.10">
    <property type="entry name" value="GIY-YIG endonuclease"/>
    <property type="match status" value="1"/>
</dbReference>
<dbReference type="Gene3D" id="4.10.860.10">
    <property type="entry name" value="UVR domain"/>
    <property type="match status" value="1"/>
</dbReference>
<dbReference type="Gene3D" id="3.30.420.340">
    <property type="entry name" value="UvrC, RNAse H endonuclease domain"/>
    <property type="match status" value="1"/>
</dbReference>
<dbReference type="HAMAP" id="MF_00203">
    <property type="entry name" value="UvrC"/>
    <property type="match status" value="1"/>
</dbReference>
<dbReference type="InterPro" id="IPR000305">
    <property type="entry name" value="GIY-YIG_endonuc"/>
</dbReference>
<dbReference type="InterPro" id="IPR035901">
    <property type="entry name" value="GIY-YIG_endonuc_sf"/>
</dbReference>
<dbReference type="InterPro" id="IPR047296">
    <property type="entry name" value="GIY-YIG_UvrC_Cho"/>
</dbReference>
<dbReference type="InterPro" id="IPR010994">
    <property type="entry name" value="RuvA_2-like"/>
</dbReference>
<dbReference type="InterPro" id="IPR001943">
    <property type="entry name" value="UVR_dom"/>
</dbReference>
<dbReference type="InterPro" id="IPR036876">
    <property type="entry name" value="UVR_dom_sf"/>
</dbReference>
<dbReference type="InterPro" id="IPR050066">
    <property type="entry name" value="UvrABC_protein_C"/>
</dbReference>
<dbReference type="InterPro" id="IPR004791">
    <property type="entry name" value="UvrC"/>
</dbReference>
<dbReference type="InterPro" id="IPR001162">
    <property type="entry name" value="UvrC_RNase_H_dom"/>
</dbReference>
<dbReference type="InterPro" id="IPR038476">
    <property type="entry name" value="UvrC_RNase_H_dom_sf"/>
</dbReference>
<dbReference type="NCBIfam" id="NF001824">
    <property type="entry name" value="PRK00558.1-5"/>
    <property type="match status" value="1"/>
</dbReference>
<dbReference type="NCBIfam" id="TIGR00194">
    <property type="entry name" value="uvrC"/>
    <property type="match status" value="1"/>
</dbReference>
<dbReference type="PANTHER" id="PTHR30562:SF1">
    <property type="entry name" value="UVRABC SYSTEM PROTEIN C"/>
    <property type="match status" value="1"/>
</dbReference>
<dbReference type="PANTHER" id="PTHR30562">
    <property type="entry name" value="UVRC/OXIDOREDUCTASE"/>
    <property type="match status" value="1"/>
</dbReference>
<dbReference type="Pfam" id="PF01541">
    <property type="entry name" value="GIY-YIG"/>
    <property type="match status" value="1"/>
</dbReference>
<dbReference type="Pfam" id="PF14520">
    <property type="entry name" value="HHH_5"/>
    <property type="match status" value="1"/>
</dbReference>
<dbReference type="Pfam" id="PF02151">
    <property type="entry name" value="UVR"/>
    <property type="match status" value="1"/>
</dbReference>
<dbReference type="Pfam" id="PF22920">
    <property type="entry name" value="UvrC_RNaseH"/>
    <property type="match status" value="1"/>
</dbReference>
<dbReference type="Pfam" id="PF08459">
    <property type="entry name" value="UvrC_RNaseH_dom"/>
    <property type="match status" value="1"/>
</dbReference>
<dbReference type="SMART" id="SM00465">
    <property type="entry name" value="GIYc"/>
    <property type="match status" value="1"/>
</dbReference>
<dbReference type="SUPFAM" id="SSF46600">
    <property type="entry name" value="C-terminal UvrC-binding domain of UvrB"/>
    <property type="match status" value="1"/>
</dbReference>
<dbReference type="SUPFAM" id="SSF82771">
    <property type="entry name" value="GIY-YIG endonuclease"/>
    <property type="match status" value="1"/>
</dbReference>
<dbReference type="SUPFAM" id="SSF47781">
    <property type="entry name" value="RuvA domain 2-like"/>
    <property type="match status" value="1"/>
</dbReference>
<dbReference type="PROSITE" id="PS50164">
    <property type="entry name" value="GIY_YIG"/>
    <property type="match status" value="1"/>
</dbReference>
<dbReference type="PROSITE" id="PS50151">
    <property type="entry name" value="UVR"/>
    <property type="match status" value="1"/>
</dbReference>
<dbReference type="PROSITE" id="PS50165">
    <property type="entry name" value="UVRC"/>
    <property type="match status" value="1"/>
</dbReference>
<proteinExistence type="inferred from homology"/>
<organism>
    <name type="scientific">Prochlorococcus marinus (strain MIT 9313)</name>
    <dbReference type="NCBI Taxonomy" id="74547"/>
    <lineage>
        <taxon>Bacteria</taxon>
        <taxon>Bacillati</taxon>
        <taxon>Cyanobacteriota</taxon>
        <taxon>Cyanophyceae</taxon>
        <taxon>Synechococcales</taxon>
        <taxon>Prochlorococcaceae</taxon>
        <taxon>Prochlorococcus</taxon>
    </lineage>
</organism>
<accession>Q7V7L7</accession>
<evidence type="ECO:0000255" key="1">
    <source>
        <dbReference type="HAMAP-Rule" id="MF_00203"/>
    </source>
</evidence>